<gene>
    <name type="ordered locus">aq_aa32</name>
</gene>
<name>YZ32_AQUAE</name>
<protein>
    <recommendedName>
        <fullName>Uncharacterized protein aq_aa32</fullName>
    </recommendedName>
</protein>
<feature type="chain" id="PRO_0000187001" description="Uncharacterized protein aq_aa32">
    <location>
        <begin position="1"/>
        <end position="196"/>
    </location>
</feature>
<keyword id="KW-0614">Plasmid</keyword>
<keyword id="KW-1185">Reference proteome</keyword>
<sequence length="196" mass="23441">MYFDSWTCEALENLPDYFKHILDEVAQINLYKMKENRKHFRKNDYGFEQAMVTYLAEKFIRNIRNLPNNLELGIAETLTKTKLESNKQPDFSLVKKDDGTVIEVMEVKTIIDNNFSWLREDVCKLRELDEVQNKFLLSINLYISRSAYTQTIKRLSKFMENDKNNSLSILCHGLLYRSRHGVQNFQLTYYYYLFKI</sequence>
<reference key="1">
    <citation type="journal article" date="1998" name="Nature">
        <title>The complete genome of the hyperthermophilic bacterium Aquifex aeolicus.</title>
        <authorList>
            <person name="Deckert G."/>
            <person name="Warren P.V."/>
            <person name="Gaasterland T."/>
            <person name="Young W.G."/>
            <person name="Lenox A.L."/>
            <person name="Graham D.E."/>
            <person name="Overbeek R."/>
            <person name="Snead M.A."/>
            <person name="Keller M."/>
            <person name="Aujay M."/>
            <person name="Huber R."/>
            <person name="Feldman R.A."/>
            <person name="Short J.M."/>
            <person name="Olsen G.J."/>
            <person name="Swanson R.V."/>
        </authorList>
    </citation>
    <scope>NUCLEOTIDE SEQUENCE [LARGE SCALE GENOMIC DNA]</scope>
    <source>
        <strain>VF5</strain>
    </source>
</reference>
<proteinExistence type="predicted"/>
<accession>O66422</accession>
<geneLocation type="plasmid">
    <name>ece1</name>
</geneLocation>
<organism>
    <name type="scientific">Aquifex aeolicus (strain VF5)</name>
    <dbReference type="NCBI Taxonomy" id="224324"/>
    <lineage>
        <taxon>Bacteria</taxon>
        <taxon>Pseudomonadati</taxon>
        <taxon>Aquificota</taxon>
        <taxon>Aquificia</taxon>
        <taxon>Aquificales</taxon>
        <taxon>Aquificaceae</taxon>
        <taxon>Aquifex</taxon>
    </lineage>
</organism>
<dbReference type="EMBL" id="AE000667">
    <property type="protein sequence ID" value="AAC07974.1"/>
    <property type="molecule type" value="Genomic_DNA"/>
</dbReference>
<dbReference type="RefSeq" id="NP_046422.1">
    <property type="nucleotide sequence ID" value="NC_001880.1"/>
</dbReference>
<dbReference type="RefSeq" id="WP_010890568.1">
    <property type="nucleotide sequence ID" value="NC_001880.1"/>
</dbReference>
<dbReference type="EnsemblBacteria" id="AAC07974">
    <property type="protein sequence ID" value="AAC07974"/>
    <property type="gene ID" value="aq_aa32"/>
</dbReference>
<dbReference type="KEGG" id="aae:aq_aa32"/>
<dbReference type="eggNOG" id="ENOG502ZDFB">
    <property type="taxonomic scope" value="Bacteria"/>
</dbReference>
<dbReference type="HOGENOM" id="CLU_1562137_0_0_0"/>
<dbReference type="InParanoid" id="O66422"/>
<dbReference type="OrthoDB" id="9891470at2"/>
<dbReference type="Proteomes" id="UP000000798">
    <property type="component" value="Plasmid ece1"/>
</dbReference>